<organism>
    <name type="scientific">Burkholderia vietnamiensis (strain G4 / LMG 22486)</name>
    <name type="common">Burkholderia cepacia (strain R1808)</name>
    <dbReference type="NCBI Taxonomy" id="269482"/>
    <lineage>
        <taxon>Bacteria</taxon>
        <taxon>Pseudomonadati</taxon>
        <taxon>Pseudomonadota</taxon>
        <taxon>Betaproteobacteria</taxon>
        <taxon>Burkholderiales</taxon>
        <taxon>Burkholderiaceae</taxon>
        <taxon>Burkholderia</taxon>
        <taxon>Burkholderia cepacia complex</taxon>
    </lineage>
</organism>
<sequence>MYAVIKTGGKQYKVAVGEKLKVEQIPADIDAEITLDQVLAVGEGESIKFGTPLVSGASVKATVVSHGRHAKVTIFKMRRRKHYQKHGGHRQNYTELRIDAINA</sequence>
<evidence type="ECO:0000255" key="1">
    <source>
        <dbReference type="HAMAP-Rule" id="MF_01363"/>
    </source>
</evidence>
<evidence type="ECO:0000305" key="2"/>
<proteinExistence type="inferred from homology"/>
<reference key="1">
    <citation type="submission" date="2007-03" db="EMBL/GenBank/DDBJ databases">
        <title>Complete sequence of chromosome 1 of Burkholderia vietnamiensis G4.</title>
        <authorList>
            <consortium name="US DOE Joint Genome Institute"/>
            <person name="Copeland A."/>
            <person name="Lucas S."/>
            <person name="Lapidus A."/>
            <person name="Barry K."/>
            <person name="Detter J.C."/>
            <person name="Glavina del Rio T."/>
            <person name="Hammon N."/>
            <person name="Israni S."/>
            <person name="Dalin E."/>
            <person name="Tice H."/>
            <person name="Pitluck S."/>
            <person name="Chain P."/>
            <person name="Malfatti S."/>
            <person name="Shin M."/>
            <person name="Vergez L."/>
            <person name="Schmutz J."/>
            <person name="Larimer F."/>
            <person name="Land M."/>
            <person name="Hauser L."/>
            <person name="Kyrpides N."/>
            <person name="Tiedje J."/>
            <person name="Richardson P."/>
        </authorList>
    </citation>
    <scope>NUCLEOTIDE SEQUENCE [LARGE SCALE GENOMIC DNA]</scope>
    <source>
        <strain>G4 / LMG 22486</strain>
    </source>
</reference>
<protein>
    <recommendedName>
        <fullName evidence="1">Large ribosomal subunit protein bL21</fullName>
    </recommendedName>
    <alternativeName>
        <fullName evidence="2">50S ribosomal protein L21</fullName>
    </alternativeName>
</protein>
<keyword id="KW-0687">Ribonucleoprotein</keyword>
<keyword id="KW-0689">Ribosomal protein</keyword>
<keyword id="KW-0694">RNA-binding</keyword>
<keyword id="KW-0699">rRNA-binding</keyword>
<gene>
    <name evidence="1" type="primary">rplU</name>
    <name type="ordered locus">Bcep1808_0557</name>
</gene>
<name>RL21_BURVG</name>
<accession>A4JBB6</accession>
<dbReference type="EMBL" id="CP000614">
    <property type="protein sequence ID" value="ABO53569.1"/>
    <property type="molecule type" value="Genomic_DNA"/>
</dbReference>
<dbReference type="SMR" id="A4JBB6"/>
<dbReference type="KEGG" id="bvi:Bcep1808_0557"/>
<dbReference type="eggNOG" id="COG0261">
    <property type="taxonomic scope" value="Bacteria"/>
</dbReference>
<dbReference type="HOGENOM" id="CLU_061463_3_1_4"/>
<dbReference type="Proteomes" id="UP000002287">
    <property type="component" value="Chromosome 1"/>
</dbReference>
<dbReference type="GO" id="GO:0005737">
    <property type="term" value="C:cytoplasm"/>
    <property type="evidence" value="ECO:0007669"/>
    <property type="project" value="UniProtKB-ARBA"/>
</dbReference>
<dbReference type="GO" id="GO:1990904">
    <property type="term" value="C:ribonucleoprotein complex"/>
    <property type="evidence" value="ECO:0007669"/>
    <property type="project" value="UniProtKB-KW"/>
</dbReference>
<dbReference type="GO" id="GO:0005840">
    <property type="term" value="C:ribosome"/>
    <property type="evidence" value="ECO:0007669"/>
    <property type="project" value="UniProtKB-KW"/>
</dbReference>
<dbReference type="GO" id="GO:0019843">
    <property type="term" value="F:rRNA binding"/>
    <property type="evidence" value="ECO:0007669"/>
    <property type="project" value="UniProtKB-UniRule"/>
</dbReference>
<dbReference type="GO" id="GO:0003735">
    <property type="term" value="F:structural constituent of ribosome"/>
    <property type="evidence" value="ECO:0007669"/>
    <property type="project" value="InterPro"/>
</dbReference>
<dbReference type="GO" id="GO:0006412">
    <property type="term" value="P:translation"/>
    <property type="evidence" value="ECO:0007669"/>
    <property type="project" value="UniProtKB-UniRule"/>
</dbReference>
<dbReference type="HAMAP" id="MF_01363">
    <property type="entry name" value="Ribosomal_bL21"/>
    <property type="match status" value="1"/>
</dbReference>
<dbReference type="InterPro" id="IPR028909">
    <property type="entry name" value="bL21-like"/>
</dbReference>
<dbReference type="InterPro" id="IPR036164">
    <property type="entry name" value="bL21-like_sf"/>
</dbReference>
<dbReference type="InterPro" id="IPR001787">
    <property type="entry name" value="Ribosomal_bL21"/>
</dbReference>
<dbReference type="InterPro" id="IPR018258">
    <property type="entry name" value="Ribosomal_bL21_CS"/>
</dbReference>
<dbReference type="NCBIfam" id="TIGR00061">
    <property type="entry name" value="L21"/>
    <property type="match status" value="1"/>
</dbReference>
<dbReference type="PANTHER" id="PTHR21349">
    <property type="entry name" value="50S RIBOSOMAL PROTEIN L21"/>
    <property type="match status" value="1"/>
</dbReference>
<dbReference type="PANTHER" id="PTHR21349:SF0">
    <property type="entry name" value="LARGE RIBOSOMAL SUBUNIT PROTEIN BL21M"/>
    <property type="match status" value="1"/>
</dbReference>
<dbReference type="Pfam" id="PF00829">
    <property type="entry name" value="Ribosomal_L21p"/>
    <property type="match status" value="1"/>
</dbReference>
<dbReference type="SUPFAM" id="SSF141091">
    <property type="entry name" value="L21p-like"/>
    <property type="match status" value="1"/>
</dbReference>
<dbReference type="PROSITE" id="PS01169">
    <property type="entry name" value="RIBOSOMAL_L21"/>
    <property type="match status" value="1"/>
</dbReference>
<comment type="function">
    <text evidence="1">This protein binds to 23S rRNA in the presence of protein L20.</text>
</comment>
<comment type="subunit">
    <text evidence="1">Part of the 50S ribosomal subunit. Contacts protein L20.</text>
</comment>
<comment type="similarity">
    <text evidence="1">Belongs to the bacterial ribosomal protein bL21 family.</text>
</comment>
<feature type="chain" id="PRO_1000067816" description="Large ribosomal subunit protein bL21">
    <location>
        <begin position="1"/>
        <end position="103"/>
    </location>
</feature>